<evidence type="ECO:0000255" key="1">
    <source>
        <dbReference type="HAMAP-Rule" id="MF_00531"/>
    </source>
</evidence>
<evidence type="ECO:0000305" key="2"/>
<protein>
    <recommendedName>
        <fullName evidence="1">Small ribosomal subunit protein uS19</fullName>
    </recommendedName>
    <alternativeName>
        <fullName evidence="2">30S ribosomal protein S19</fullName>
    </alternativeName>
</protein>
<keyword id="KW-0687">Ribonucleoprotein</keyword>
<keyword id="KW-0689">Ribosomal protein</keyword>
<keyword id="KW-0694">RNA-binding</keyword>
<keyword id="KW-0699">rRNA-binding</keyword>
<organism>
    <name type="scientific">Yersinia enterocolitica serotype O:8 / biotype 1B (strain NCTC 13174 / 8081)</name>
    <dbReference type="NCBI Taxonomy" id="393305"/>
    <lineage>
        <taxon>Bacteria</taxon>
        <taxon>Pseudomonadati</taxon>
        <taxon>Pseudomonadota</taxon>
        <taxon>Gammaproteobacteria</taxon>
        <taxon>Enterobacterales</taxon>
        <taxon>Yersiniaceae</taxon>
        <taxon>Yersinia</taxon>
    </lineage>
</organism>
<dbReference type="EMBL" id="AM286415">
    <property type="protein sequence ID" value="CAL13938.1"/>
    <property type="molecule type" value="Genomic_DNA"/>
</dbReference>
<dbReference type="RefSeq" id="WP_002213430.1">
    <property type="nucleotide sequence ID" value="NC_008800.1"/>
</dbReference>
<dbReference type="RefSeq" id="YP_001008064.1">
    <property type="nucleotide sequence ID" value="NC_008800.1"/>
</dbReference>
<dbReference type="SMR" id="A1JS33"/>
<dbReference type="GeneID" id="97454235"/>
<dbReference type="KEGG" id="yen:YE3919"/>
<dbReference type="PATRIC" id="fig|393305.7.peg.4169"/>
<dbReference type="eggNOG" id="COG0185">
    <property type="taxonomic scope" value="Bacteria"/>
</dbReference>
<dbReference type="HOGENOM" id="CLU_144911_0_1_6"/>
<dbReference type="OrthoDB" id="9797833at2"/>
<dbReference type="PRO" id="PR:A1JS33"/>
<dbReference type="Proteomes" id="UP000000642">
    <property type="component" value="Chromosome"/>
</dbReference>
<dbReference type="GO" id="GO:0005737">
    <property type="term" value="C:cytoplasm"/>
    <property type="evidence" value="ECO:0007669"/>
    <property type="project" value="UniProtKB-ARBA"/>
</dbReference>
<dbReference type="GO" id="GO:0015935">
    <property type="term" value="C:small ribosomal subunit"/>
    <property type="evidence" value="ECO:0007669"/>
    <property type="project" value="InterPro"/>
</dbReference>
<dbReference type="GO" id="GO:0019843">
    <property type="term" value="F:rRNA binding"/>
    <property type="evidence" value="ECO:0007669"/>
    <property type="project" value="UniProtKB-UniRule"/>
</dbReference>
<dbReference type="GO" id="GO:0003735">
    <property type="term" value="F:structural constituent of ribosome"/>
    <property type="evidence" value="ECO:0007669"/>
    <property type="project" value="InterPro"/>
</dbReference>
<dbReference type="GO" id="GO:0000028">
    <property type="term" value="P:ribosomal small subunit assembly"/>
    <property type="evidence" value="ECO:0007669"/>
    <property type="project" value="TreeGrafter"/>
</dbReference>
<dbReference type="GO" id="GO:0006412">
    <property type="term" value="P:translation"/>
    <property type="evidence" value="ECO:0007669"/>
    <property type="project" value="UniProtKB-UniRule"/>
</dbReference>
<dbReference type="FunFam" id="3.30.860.10:FF:000001">
    <property type="entry name" value="30S ribosomal protein S19"/>
    <property type="match status" value="1"/>
</dbReference>
<dbReference type="Gene3D" id="3.30.860.10">
    <property type="entry name" value="30s Ribosomal Protein S19, Chain A"/>
    <property type="match status" value="1"/>
</dbReference>
<dbReference type="HAMAP" id="MF_00531">
    <property type="entry name" value="Ribosomal_uS19"/>
    <property type="match status" value="1"/>
</dbReference>
<dbReference type="InterPro" id="IPR002222">
    <property type="entry name" value="Ribosomal_uS19"/>
</dbReference>
<dbReference type="InterPro" id="IPR005732">
    <property type="entry name" value="Ribosomal_uS19_bac-type"/>
</dbReference>
<dbReference type="InterPro" id="IPR020934">
    <property type="entry name" value="Ribosomal_uS19_CS"/>
</dbReference>
<dbReference type="InterPro" id="IPR023575">
    <property type="entry name" value="Ribosomal_uS19_SF"/>
</dbReference>
<dbReference type="NCBIfam" id="TIGR01050">
    <property type="entry name" value="rpsS_bact"/>
    <property type="match status" value="1"/>
</dbReference>
<dbReference type="PANTHER" id="PTHR11880">
    <property type="entry name" value="RIBOSOMAL PROTEIN S19P FAMILY MEMBER"/>
    <property type="match status" value="1"/>
</dbReference>
<dbReference type="PANTHER" id="PTHR11880:SF8">
    <property type="entry name" value="SMALL RIBOSOMAL SUBUNIT PROTEIN US19M"/>
    <property type="match status" value="1"/>
</dbReference>
<dbReference type="Pfam" id="PF00203">
    <property type="entry name" value="Ribosomal_S19"/>
    <property type="match status" value="1"/>
</dbReference>
<dbReference type="PIRSF" id="PIRSF002144">
    <property type="entry name" value="Ribosomal_S19"/>
    <property type="match status" value="1"/>
</dbReference>
<dbReference type="PRINTS" id="PR00975">
    <property type="entry name" value="RIBOSOMALS19"/>
</dbReference>
<dbReference type="SUPFAM" id="SSF54570">
    <property type="entry name" value="Ribosomal protein S19"/>
    <property type="match status" value="1"/>
</dbReference>
<dbReference type="PROSITE" id="PS00323">
    <property type="entry name" value="RIBOSOMAL_S19"/>
    <property type="match status" value="1"/>
</dbReference>
<reference key="1">
    <citation type="journal article" date="2006" name="PLoS Genet.">
        <title>The complete genome sequence and comparative genome analysis of the high pathogenicity Yersinia enterocolitica strain 8081.</title>
        <authorList>
            <person name="Thomson N.R."/>
            <person name="Howard S."/>
            <person name="Wren B.W."/>
            <person name="Holden M.T.G."/>
            <person name="Crossman L."/>
            <person name="Challis G.L."/>
            <person name="Churcher C."/>
            <person name="Mungall K."/>
            <person name="Brooks K."/>
            <person name="Chillingworth T."/>
            <person name="Feltwell T."/>
            <person name="Abdellah Z."/>
            <person name="Hauser H."/>
            <person name="Jagels K."/>
            <person name="Maddison M."/>
            <person name="Moule S."/>
            <person name="Sanders M."/>
            <person name="Whitehead S."/>
            <person name="Quail M.A."/>
            <person name="Dougan G."/>
            <person name="Parkhill J."/>
            <person name="Prentice M.B."/>
        </authorList>
    </citation>
    <scope>NUCLEOTIDE SEQUENCE [LARGE SCALE GENOMIC DNA]</scope>
    <source>
        <strain>NCTC 13174 / 8081</strain>
    </source>
</reference>
<accession>A1JS33</accession>
<proteinExistence type="inferred from homology"/>
<gene>
    <name evidence="1" type="primary">rpsS</name>
    <name type="ordered locus">YE3919</name>
</gene>
<comment type="function">
    <text evidence="1">Protein S19 forms a complex with S13 that binds strongly to the 16S ribosomal RNA.</text>
</comment>
<comment type="similarity">
    <text evidence="1">Belongs to the universal ribosomal protein uS19 family.</text>
</comment>
<feature type="chain" id="PRO_1000051145" description="Small ribosomal subunit protein uS19">
    <location>
        <begin position="1"/>
        <end position="92"/>
    </location>
</feature>
<sequence length="92" mass="10430">MPRSLKKGPFIDLHLLKKVEKAVESGDKKPIRTWSRRSTVFPNMIGLTIAVHNGRQHVPVFVSDEMVGHKLGEFAPTRTYRGHAADKKAKKR</sequence>
<name>RS19_YERE8</name>